<keyword id="KW-0028">Amino-acid biosynthesis</keyword>
<keyword id="KW-0368">Histidine biosynthesis</keyword>
<keyword id="KW-0378">Hydrolase</keyword>
<keyword id="KW-0486">Methionine biosynthesis</keyword>
<keyword id="KW-0511">Multifunctional enzyme</keyword>
<keyword id="KW-0521">NADP</keyword>
<keyword id="KW-0554">One-carbon metabolism</keyword>
<keyword id="KW-0560">Oxidoreductase</keyword>
<keyword id="KW-0658">Purine biosynthesis</keyword>
<name>FOLD_BORBZ</name>
<sequence length="308" mass="34004">MGFKGYILSIVFNGKDFANKYYLMLKEFLKQHNLRDKIALKVVLANDEPASNLYVSIKSRVAKEIGLNVEVIKFSANSVQSDILEVIDRENKNLSTDGIIVQLPLLKGMDLNSILNSIVYSKDVDGLSFVNLGKMILGDKKGFIPCTALAVLKILRDEGIKTLGKTVVVVGRSPLVGRPISILLSSKPYDATVIACHSKSIYLDVYLRQADIVISAVGKPRLIDKSMLCGKPYVIDIGISEIETDNGKILSGDTDFDNIKECVKFITPVKGGIGPVTVLMLMFNTIKAHLINNRMFDVLNRLEKLLEV</sequence>
<comment type="function">
    <text evidence="1">Catalyzes the oxidation of 5,10-methylenetetrahydrofolate to 5,10-methenyltetrahydrofolate and then the hydrolysis of 5,10-methenyltetrahydrofolate to 10-formyltetrahydrofolate.</text>
</comment>
<comment type="catalytic activity">
    <reaction evidence="1">
        <text>(6R)-5,10-methylene-5,6,7,8-tetrahydrofolate + NADP(+) = (6R)-5,10-methenyltetrahydrofolate + NADPH</text>
        <dbReference type="Rhea" id="RHEA:22812"/>
        <dbReference type="ChEBI" id="CHEBI:15636"/>
        <dbReference type="ChEBI" id="CHEBI:57455"/>
        <dbReference type="ChEBI" id="CHEBI:57783"/>
        <dbReference type="ChEBI" id="CHEBI:58349"/>
        <dbReference type="EC" id="1.5.1.5"/>
    </reaction>
</comment>
<comment type="catalytic activity">
    <reaction evidence="1">
        <text>(6R)-5,10-methenyltetrahydrofolate + H2O = (6R)-10-formyltetrahydrofolate + H(+)</text>
        <dbReference type="Rhea" id="RHEA:23700"/>
        <dbReference type="ChEBI" id="CHEBI:15377"/>
        <dbReference type="ChEBI" id="CHEBI:15378"/>
        <dbReference type="ChEBI" id="CHEBI:57455"/>
        <dbReference type="ChEBI" id="CHEBI:195366"/>
        <dbReference type="EC" id="3.5.4.9"/>
    </reaction>
</comment>
<comment type="pathway">
    <text evidence="1">One-carbon metabolism; tetrahydrofolate interconversion.</text>
</comment>
<comment type="subunit">
    <text evidence="1">Homodimer.</text>
</comment>
<comment type="similarity">
    <text evidence="1">Belongs to the tetrahydrofolate dehydrogenase/cyclohydrolase family.</text>
</comment>
<protein>
    <recommendedName>
        <fullName evidence="1">Bifunctional protein FolD</fullName>
    </recommendedName>
    <domain>
        <recommendedName>
            <fullName evidence="1">Methylenetetrahydrofolate dehydrogenase</fullName>
            <ecNumber evidence="1">1.5.1.5</ecNumber>
        </recommendedName>
    </domain>
    <domain>
        <recommendedName>
            <fullName evidence="1">Methenyltetrahydrofolate cyclohydrolase</fullName>
            <ecNumber evidence="1">3.5.4.9</ecNumber>
        </recommendedName>
    </domain>
</protein>
<gene>
    <name evidence="1" type="primary">folD</name>
    <name type="ordered locus">BbuZS7_0026</name>
</gene>
<organism>
    <name type="scientific">Borreliella burgdorferi (strain ZS7)</name>
    <name type="common">Borrelia burgdorferi</name>
    <dbReference type="NCBI Taxonomy" id="445985"/>
    <lineage>
        <taxon>Bacteria</taxon>
        <taxon>Pseudomonadati</taxon>
        <taxon>Spirochaetota</taxon>
        <taxon>Spirochaetia</taxon>
        <taxon>Spirochaetales</taxon>
        <taxon>Borreliaceae</taxon>
        <taxon>Borreliella</taxon>
    </lineage>
</organism>
<proteinExistence type="inferred from homology"/>
<evidence type="ECO:0000255" key="1">
    <source>
        <dbReference type="HAMAP-Rule" id="MF_01576"/>
    </source>
</evidence>
<feature type="chain" id="PRO_1000147444" description="Bifunctional protein FolD">
    <location>
        <begin position="1"/>
        <end position="308"/>
    </location>
</feature>
<feature type="binding site" evidence="1">
    <location>
        <begin position="171"/>
        <end position="173"/>
    </location>
    <ligand>
        <name>NADP(+)</name>
        <dbReference type="ChEBI" id="CHEBI:58349"/>
    </ligand>
</feature>
<feature type="binding site" evidence="1">
    <location>
        <position position="198"/>
    </location>
    <ligand>
        <name>NADP(+)</name>
        <dbReference type="ChEBI" id="CHEBI:58349"/>
    </ligand>
</feature>
<feature type="binding site" evidence="1">
    <location>
        <position position="239"/>
    </location>
    <ligand>
        <name>NADP(+)</name>
        <dbReference type="ChEBI" id="CHEBI:58349"/>
    </ligand>
</feature>
<accession>B7J0W5</accession>
<dbReference type="EC" id="1.5.1.5" evidence="1"/>
<dbReference type="EC" id="3.5.4.9" evidence="1"/>
<dbReference type="EMBL" id="CP001205">
    <property type="protein sequence ID" value="ACK74420.1"/>
    <property type="molecule type" value="Genomic_DNA"/>
</dbReference>
<dbReference type="SMR" id="B7J0W5"/>
<dbReference type="KEGG" id="bbz:BbuZS7_0026"/>
<dbReference type="HOGENOM" id="CLU_034045_2_0_12"/>
<dbReference type="UniPathway" id="UPA00193"/>
<dbReference type="Proteomes" id="UP000006901">
    <property type="component" value="Chromosome"/>
</dbReference>
<dbReference type="GO" id="GO:0005829">
    <property type="term" value="C:cytosol"/>
    <property type="evidence" value="ECO:0007669"/>
    <property type="project" value="TreeGrafter"/>
</dbReference>
<dbReference type="GO" id="GO:0004477">
    <property type="term" value="F:methenyltetrahydrofolate cyclohydrolase activity"/>
    <property type="evidence" value="ECO:0007669"/>
    <property type="project" value="UniProtKB-UniRule"/>
</dbReference>
<dbReference type="GO" id="GO:0004488">
    <property type="term" value="F:methylenetetrahydrofolate dehydrogenase (NADP+) activity"/>
    <property type="evidence" value="ECO:0007669"/>
    <property type="project" value="UniProtKB-UniRule"/>
</dbReference>
<dbReference type="GO" id="GO:0000105">
    <property type="term" value="P:L-histidine biosynthetic process"/>
    <property type="evidence" value="ECO:0007669"/>
    <property type="project" value="UniProtKB-KW"/>
</dbReference>
<dbReference type="GO" id="GO:0009086">
    <property type="term" value="P:methionine biosynthetic process"/>
    <property type="evidence" value="ECO:0007669"/>
    <property type="project" value="UniProtKB-KW"/>
</dbReference>
<dbReference type="GO" id="GO:0006164">
    <property type="term" value="P:purine nucleotide biosynthetic process"/>
    <property type="evidence" value="ECO:0007669"/>
    <property type="project" value="UniProtKB-KW"/>
</dbReference>
<dbReference type="GO" id="GO:0035999">
    <property type="term" value="P:tetrahydrofolate interconversion"/>
    <property type="evidence" value="ECO:0007669"/>
    <property type="project" value="UniProtKB-UniRule"/>
</dbReference>
<dbReference type="CDD" id="cd01080">
    <property type="entry name" value="NAD_bind_m-THF_DH_Cyclohyd"/>
    <property type="match status" value="1"/>
</dbReference>
<dbReference type="Gene3D" id="3.40.50.10860">
    <property type="entry name" value="Leucine Dehydrogenase, chain A, domain 1"/>
    <property type="match status" value="1"/>
</dbReference>
<dbReference type="Gene3D" id="3.40.50.720">
    <property type="entry name" value="NAD(P)-binding Rossmann-like Domain"/>
    <property type="match status" value="1"/>
</dbReference>
<dbReference type="HAMAP" id="MF_01576">
    <property type="entry name" value="THF_DHG_CYH"/>
    <property type="match status" value="1"/>
</dbReference>
<dbReference type="InterPro" id="IPR046346">
    <property type="entry name" value="Aminoacid_DH-like_N_sf"/>
</dbReference>
<dbReference type="InterPro" id="IPR036291">
    <property type="entry name" value="NAD(P)-bd_dom_sf"/>
</dbReference>
<dbReference type="InterPro" id="IPR000672">
    <property type="entry name" value="THF_DH/CycHdrlase"/>
</dbReference>
<dbReference type="InterPro" id="IPR020630">
    <property type="entry name" value="THF_DH/CycHdrlase_cat_dom"/>
</dbReference>
<dbReference type="InterPro" id="IPR020631">
    <property type="entry name" value="THF_DH/CycHdrlase_NAD-bd_dom"/>
</dbReference>
<dbReference type="PANTHER" id="PTHR48099:SF5">
    <property type="entry name" value="C-1-TETRAHYDROFOLATE SYNTHASE, CYTOPLASMIC"/>
    <property type="match status" value="1"/>
</dbReference>
<dbReference type="PANTHER" id="PTHR48099">
    <property type="entry name" value="C-1-TETRAHYDROFOLATE SYNTHASE, CYTOPLASMIC-RELATED"/>
    <property type="match status" value="1"/>
</dbReference>
<dbReference type="Pfam" id="PF00763">
    <property type="entry name" value="THF_DHG_CYH"/>
    <property type="match status" value="1"/>
</dbReference>
<dbReference type="Pfam" id="PF02882">
    <property type="entry name" value="THF_DHG_CYH_C"/>
    <property type="match status" value="1"/>
</dbReference>
<dbReference type="PRINTS" id="PR00085">
    <property type="entry name" value="THFDHDRGNASE"/>
</dbReference>
<dbReference type="SUPFAM" id="SSF53223">
    <property type="entry name" value="Aminoacid dehydrogenase-like, N-terminal domain"/>
    <property type="match status" value="1"/>
</dbReference>
<dbReference type="SUPFAM" id="SSF51735">
    <property type="entry name" value="NAD(P)-binding Rossmann-fold domains"/>
    <property type="match status" value="1"/>
</dbReference>
<reference key="1">
    <citation type="journal article" date="2011" name="J. Bacteriol.">
        <title>Whole-genome sequences of thirteen isolates of Borrelia burgdorferi.</title>
        <authorList>
            <person name="Schutzer S.E."/>
            <person name="Fraser-Liggett C.M."/>
            <person name="Casjens S.R."/>
            <person name="Qiu W.G."/>
            <person name="Dunn J.J."/>
            <person name="Mongodin E.F."/>
            <person name="Luft B.J."/>
        </authorList>
    </citation>
    <scope>NUCLEOTIDE SEQUENCE [LARGE SCALE GENOMIC DNA]</scope>
    <source>
        <strain>ZS7</strain>
    </source>
</reference>